<reference key="1">
    <citation type="journal article" date="2011" name="J. Bacteriol.">
        <title>Genome sequence of lineage III Listeria monocytogenes strain HCC23.</title>
        <authorList>
            <person name="Steele C.L."/>
            <person name="Donaldson J.R."/>
            <person name="Paul D."/>
            <person name="Banes M.M."/>
            <person name="Arick T."/>
            <person name="Bridges S.M."/>
            <person name="Lawrence M.L."/>
        </authorList>
    </citation>
    <scope>NUCLEOTIDE SEQUENCE [LARGE SCALE GENOMIC DNA]</scope>
    <source>
        <strain>HCC23</strain>
    </source>
</reference>
<organism>
    <name type="scientific">Listeria monocytogenes serotype 4a (strain HCC23)</name>
    <dbReference type="NCBI Taxonomy" id="552536"/>
    <lineage>
        <taxon>Bacteria</taxon>
        <taxon>Bacillati</taxon>
        <taxon>Bacillota</taxon>
        <taxon>Bacilli</taxon>
        <taxon>Bacillales</taxon>
        <taxon>Listeriaceae</taxon>
        <taxon>Listeria</taxon>
    </lineage>
</organism>
<proteinExistence type="inferred from homology"/>
<name>CHDC_LISMH</name>
<feature type="chain" id="PRO_1000184939" description="Coproheme decarboxylase">
    <location>
        <begin position="1"/>
        <end position="251"/>
    </location>
</feature>
<feature type="active site" evidence="1">
    <location>
        <position position="147"/>
    </location>
</feature>
<feature type="binding site" evidence="1">
    <location>
        <position position="133"/>
    </location>
    <ligand>
        <name>Fe-coproporphyrin III</name>
        <dbReference type="ChEBI" id="CHEBI:68438"/>
    </ligand>
</feature>
<feature type="binding site" evidence="1">
    <location>
        <begin position="147"/>
        <end position="151"/>
    </location>
    <ligand>
        <name>Fe-coproporphyrin III</name>
        <dbReference type="ChEBI" id="CHEBI:68438"/>
    </ligand>
</feature>
<feature type="binding site" description="axial binding residue" evidence="1">
    <location>
        <position position="174"/>
    </location>
    <ligand>
        <name>Fe-coproporphyrin III</name>
        <dbReference type="ChEBI" id="CHEBI:68438"/>
    </ligand>
    <ligandPart>
        <name>Fe</name>
        <dbReference type="ChEBI" id="CHEBI:18248"/>
    </ligandPart>
</feature>
<feature type="binding site" evidence="1">
    <location>
        <position position="187"/>
    </location>
    <ligand>
        <name>Fe-coproporphyrin III</name>
        <dbReference type="ChEBI" id="CHEBI:68438"/>
    </ligand>
</feature>
<feature type="binding site" evidence="1">
    <location>
        <position position="225"/>
    </location>
    <ligand>
        <name>Fe-coproporphyrin III</name>
        <dbReference type="ChEBI" id="CHEBI:68438"/>
    </ligand>
</feature>
<dbReference type="EC" id="1.3.98.5" evidence="1"/>
<dbReference type="EMBL" id="CP001175">
    <property type="protein sequence ID" value="ACK38790.1"/>
    <property type="molecule type" value="Genomic_DNA"/>
</dbReference>
<dbReference type="SMR" id="B8DH02"/>
<dbReference type="KEGG" id="lmh:LMHCC_0433"/>
<dbReference type="HOGENOM" id="CLU_063226_1_0_9"/>
<dbReference type="UniPathway" id="UPA00252"/>
<dbReference type="GO" id="GO:0020037">
    <property type="term" value="F:heme binding"/>
    <property type="evidence" value="ECO:0007669"/>
    <property type="project" value="InterPro"/>
</dbReference>
<dbReference type="GO" id="GO:0046872">
    <property type="term" value="F:metal ion binding"/>
    <property type="evidence" value="ECO:0007669"/>
    <property type="project" value="UniProtKB-KW"/>
</dbReference>
<dbReference type="GO" id="GO:0016634">
    <property type="term" value="F:oxidoreductase activity, acting on the CH-CH group of donors, oxygen as acceptor"/>
    <property type="evidence" value="ECO:0007669"/>
    <property type="project" value="UniProtKB-UniRule"/>
</dbReference>
<dbReference type="GO" id="GO:0004601">
    <property type="term" value="F:peroxidase activity"/>
    <property type="evidence" value="ECO:0007669"/>
    <property type="project" value="InterPro"/>
</dbReference>
<dbReference type="GO" id="GO:0006785">
    <property type="term" value="P:heme B biosynthetic process"/>
    <property type="evidence" value="ECO:0007669"/>
    <property type="project" value="UniProtKB-UniRule"/>
</dbReference>
<dbReference type="Gene3D" id="3.30.70.1030">
    <property type="entry name" value="Apc35880, domain 1"/>
    <property type="match status" value="2"/>
</dbReference>
<dbReference type="HAMAP" id="MF_01442">
    <property type="entry name" value="Coproheme_decarbox_1"/>
    <property type="match status" value="1"/>
</dbReference>
<dbReference type="InterPro" id="IPR031332">
    <property type="entry name" value="CHDC"/>
</dbReference>
<dbReference type="InterPro" id="IPR010644">
    <property type="entry name" value="ChdC/CLD"/>
</dbReference>
<dbReference type="InterPro" id="IPR011008">
    <property type="entry name" value="Dimeric_a/b-barrel"/>
</dbReference>
<dbReference type="NCBIfam" id="NF008913">
    <property type="entry name" value="PRK12276.1"/>
    <property type="match status" value="1"/>
</dbReference>
<dbReference type="PANTHER" id="PTHR36843:SF1">
    <property type="entry name" value="COPROHEME DECARBOXYLASE"/>
    <property type="match status" value="1"/>
</dbReference>
<dbReference type="PANTHER" id="PTHR36843">
    <property type="entry name" value="HEME-DEPENDENT PEROXIDASE YWFI-RELATED"/>
    <property type="match status" value="1"/>
</dbReference>
<dbReference type="Pfam" id="PF06778">
    <property type="entry name" value="Chlor_dismutase"/>
    <property type="match status" value="1"/>
</dbReference>
<dbReference type="SUPFAM" id="SSF54909">
    <property type="entry name" value="Dimeric alpha+beta barrel"/>
    <property type="match status" value="1"/>
</dbReference>
<comment type="function">
    <text evidence="1">Involved in coproporphyrin-dependent heme b biosynthesis. Catalyzes the decarboxylation of Fe-coproporphyrin III (coproheme) to heme b (protoheme IX), the last step of the pathway. The reaction occurs in a stepwise manner with a three-propionate intermediate.</text>
</comment>
<comment type="catalytic activity">
    <reaction evidence="1">
        <text>Fe-coproporphyrin III + 2 H2O2 + 2 H(+) = heme b + 2 CO2 + 4 H2O</text>
        <dbReference type="Rhea" id="RHEA:56516"/>
        <dbReference type="ChEBI" id="CHEBI:15377"/>
        <dbReference type="ChEBI" id="CHEBI:15378"/>
        <dbReference type="ChEBI" id="CHEBI:16240"/>
        <dbReference type="ChEBI" id="CHEBI:16526"/>
        <dbReference type="ChEBI" id="CHEBI:60344"/>
        <dbReference type="ChEBI" id="CHEBI:68438"/>
        <dbReference type="EC" id="1.3.98.5"/>
    </reaction>
    <physiologicalReaction direction="left-to-right" evidence="1">
        <dbReference type="Rhea" id="RHEA:56517"/>
    </physiologicalReaction>
</comment>
<comment type="catalytic activity">
    <reaction evidence="1">
        <text>Fe-coproporphyrin III + H2O2 + H(+) = harderoheme III + CO2 + 2 H2O</text>
        <dbReference type="Rhea" id="RHEA:57940"/>
        <dbReference type="ChEBI" id="CHEBI:15377"/>
        <dbReference type="ChEBI" id="CHEBI:15378"/>
        <dbReference type="ChEBI" id="CHEBI:16240"/>
        <dbReference type="ChEBI" id="CHEBI:16526"/>
        <dbReference type="ChEBI" id="CHEBI:68438"/>
        <dbReference type="ChEBI" id="CHEBI:142463"/>
    </reaction>
    <physiologicalReaction direction="left-to-right" evidence="1">
        <dbReference type="Rhea" id="RHEA:57941"/>
    </physiologicalReaction>
</comment>
<comment type="catalytic activity">
    <reaction evidence="1">
        <text>harderoheme III + H2O2 + H(+) = heme b + CO2 + 2 H2O</text>
        <dbReference type="Rhea" id="RHEA:57944"/>
        <dbReference type="ChEBI" id="CHEBI:15377"/>
        <dbReference type="ChEBI" id="CHEBI:15378"/>
        <dbReference type="ChEBI" id="CHEBI:16240"/>
        <dbReference type="ChEBI" id="CHEBI:16526"/>
        <dbReference type="ChEBI" id="CHEBI:60344"/>
        <dbReference type="ChEBI" id="CHEBI:142463"/>
    </reaction>
    <physiologicalReaction direction="left-to-right" evidence="1">
        <dbReference type="Rhea" id="RHEA:57945"/>
    </physiologicalReaction>
</comment>
<comment type="cofactor">
    <cofactor evidence="1">
        <name>Fe-coproporphyrin III</name>
        <dbReference type="ChEBI" id="CHEBI:68438"/>
    </cofactor>
    <text evidence="1">Fe-coproporphyrin III acts both as a substrate and a redox cofactor.</text>
</comment>
<comment type="pathway">
    <text evidence="1">Porphyrin-containing compound metabolism; protoheme biosynthesis.</text>
</comment>
<comment type="similarity">
    <text evidence="1">Belongs to the ChdC family. Type 1 subfamily.</text>
</comment>
<protein>
    <recommendedName>
        <fullName evidence="1">Coproheme decarboxylase</fullName>
        <ecNumber evidence="1">1.3.98.5</ecNumber>
    </recommendedName>
    <alternativeName>
        <fullName evidence="1">Coproheme III oxidative decarboxylase</fullName>
    </alternativeName>
    <alternativeName>
        <fullName evidence="1">Hydrogen peroxide-dependent heme synthase</fullName>
    </alternativeName>
</protein>
<accession>B8DH02</accession>
<sequence length="251" mass="28866">MNEAVKTLDGWFCLHDFRSIDWAAWRELNPGNQELMLNELSHFLSDMEITKNIGEGEHTIYSILGQKADLVFFTLRDSLEALNEVENRFNKLAIADYLLPTYSYISVVELSNYLASHMAGGEDPYQNKGVRARLYPALPPKKHICFYPMSKKRDGADNWYMLPMEERQQLIRDHGLIGRSYAGKVQQIIGGSIGFDDYEWGVTLFSDDALEFKRIVTEMRFDEASARYAEFGSFFIGNLLLSEQLSKLFTI</sequence>
<gene>
    <name evidence="1" type="primary">chdC</name>
    <name type="ordered locus">LMHCC_0433</name>
</gene>
<keyword id="KW-0349">Heme</keyword>
<keyword id="KW-0350">Heme biosynthesis</keyword>
<keyword id="KW-0408">Iron</keyword>
<keyword id="KW-0479">Metal-binding</keyword>
<keyword id="KW-0560">Oxidoreductase</keyword>
<evidence type="ECO:0000255" key="1">
    <source>
        <dbReference type="HAMAP-Rule" id="MF_01442"/>
    </source>
</evidence>